<name>NUOD_NEIMA</name>
<proteinExistence type="inferred from homology"/>
<organism>
    <name type="scientific">Neisseria meningitidis serogroup A / serotype 4A (strain DSM 15465 / Z2491)</name>
    <dbReference type="NCBI Taxonomy" id="122587"/>
    <lineage>
        <taxon>Bacteria</taxon>
        <taxon>Pseudomonadati</taxon>
        <taxon>Pseudomonadota</taxon>
        <taxon>Betaproteobacteria</taxon>
        <taxon>Neisseriales</taxon>
        <taxon>Neisseriaceae</taxon>
        <taxon>Neisseria</taxon>
    </lineage>
</organism>
<sequence length="418" mass="47712">MANKLRNYTINFGPQHPAAHGVLRMILELDGEQIVRADPHIGLLHRGTEKLAETKTYLQALPYMDRLDYVSMMVNEQAYCLAVEKLAGIDVPIRAQYIRVMFAEVTRILNHLMGIGSHAFDIGAMTAILYAFRDREELMDLYEAVSGARMHAAYFRPGGVYRDLPDFMPKYESSKFRNAKVLKQLNESREGTMLDFIDAFCERFPKNIDTLETLLTDNRIWKQRTVGIGVVSPERAMQKGFTGVMLRGSGVEWDVRKTQPYEVYDKMDFDIPVGVNGDCYDRYLCRMEEMRQSVRIIKQCSEWLRVNPGPVITTNHKFAPPKRTEMKTGMEDLIHHFKLFTEGMHVPEGETYTAVEHPKGEFGVYIISDGANKPYRLKIRAPGFAHLQGMDEMAKGHMLADVVAIIGTQDIVFGEVDR</sequence>
<gene>
    <name evidence="1" type="primary">nuoD</name>
    <name type="ordered locus">NMA0016</name>
</gene>
<evidence type="ECO:0000255" key="1">
    <source>
        <dbReference type="HAMAP-Rule" id="MF_01358"/>
    </source>
</evidence>
<keyword id="KW-0997">Cell inner membrane</keyword>
<keyword id="KW-1003">Cell membrane</keyword>
<keyword id="KW-0472">Membrane</keyword>
<keyword id="KW-0520">NAD</keyword>
<keyword id="KW-0874">Quinone</keyword>
<keyword id="KW-1278">Translocase</keyword>
<keyword id="KW-0813">Transport</keyword>
<keyword id="KW-0830">Ubiquinone</keyword>
<accession>A1INN7</accession>
<dbReference type="EC" id="7.1.1.-" evidence="1"/>
<dbReference type="EMBL" id="AL157959">
    <property type="protein sequence ID" value="CAM07344.1"/>
    <property type="molecule type" value="Genomic_DNA"/>
</dbReference>
<dbReference type="PIR" id="D81992">
    <property type="entry name" value="D81992"/>
</dbReference>
<dbReference type="RefSeq" id="WP_002233449.1">
    <property type="nucleotide sequence ID" value="NC_003116.1"/>
</dbReference>
<dbReference type="SMR" id="A1INN7"/>
<dbReference type="EnsemblBacteria" id="CAM07344">
    <property type="protein sequence ID" value="CAM07344"/>
    <property type="gene ID" value="NMA0016"/>
</dbReference>
<dbReference type="GeneID" id="93387331"/>
<dbReference type="KEGG" id="nma:NMA0016"/>
<dbReference type="HOGENOM" id="CLU_015134_1_1_4"/>
<dbReference type="Proteomes" id="UP000000626">
    <property type="component" value="Chromosome"/>
</dbReference>
<dbReference type="GO" id="GO:0005886">
    <property type="term" value="C:plasma membrane"/>
    <property type="evidence" value="ECO:0007669"/>
    <property type="project" value="UniProtKB-SubCell"/>
</dbReference>
<dbReference type="GO" id="GO:0051287">
    <property type="term" value="F:NAD binding"/>
    <property type="evidence" value="ECO:0007669"/>
    <property type="project" value="InterPro"/>
</dbReference>
<dbReference type="GO" id="GO:0050136">
    <property type="term" value="F:NADH:ubiquinone reductase (non-electrogenic) activity"/>
    <property type="evidence" value="ECO:0007669"/>
    <property type="project" value="UniProtKB-UniRule"/>
</dbReference>
<dbReference type="GO" id="GO:0048038">
    <property type="term" value="F:quinone binding"/>
    <property type="evidence" value="ECO:0007669"/>
    <property type="project" value="UniProtKB-KW"/>
</dbReference>
<dbReference type="FunFam" id="1.10.645.10:FF:000005">
    <property type="entry name" value="NADH-quinone oxidoreductase subunit D"/>
    <property type="match status" value="1"/>
</dbReference>
<dbReference type="Gene3D" id="1.10.645.10">
    <property type="entry name" value="Cytochrome-c3 Hydrogenase, chain B"/>
    <property type="match status" value="1"/>
</dbReference>
<dbReference type="HAMAP" id="MF_01358">
    <property type="entry name" value="NDH1_NuoD"/>
    <property type="match status" value="1"/>
</dbReference>
<dbReference type="InterPro" id="IPR001135">
    <property type="entry name" value="NADH_Q_OxRdtase_suD"/>
</dbReference>
<dbReference type="InterPro" id="IPR014029">
    <property type="entry name" value="NADH_UbQ_OxRdtase_49kDa_CS"/>
</dbReference>
<dbReference type="InterPro" id="IPR022885">
    <property type="entry name" value="NDH1_su_D/H"/>
</dbReference>
<dbReference type="InterPro" id="IPR029014">
    <property type="entry name" value="NiFe-Hase_large"/>
</dbReference>
<dbReference type="NCBIfam" id="TIGR01962">
    <property type="entry name" value="NuoD"/>
    <property type="match status" value="1"/>
</dbReference>
<dbReference type="NCBIfam" id="NF004739">
    <property type="entry name" value="PRK06075.1"/>
    <property type="match status" value="1"/>
</dbReference>
<dbReference type="PANTHER" id="PTHR11993:SF10">
    <property type="entry name" value="NADH DEHYDROGENASE [UBIQUINONE] IRON-SULFUR PROTEIN 2, MITOCHONDRIAL"/>
    <property type="match status" value="1"/>
</dbReference>
<dbReference type="PANTHER" id="PTHR11993">
    <property type="entry name" value="NADH-UBIQUINONE OXIDOREDUCTASE 49 KDA SUBUNIT"/>
    <property type="match status" value="1"/>
</dbReference>
<dbReference type="Pfam" id="PF00346">
    <property type="entry name" value="Complex1_49kDa"/>
    <property type="match status" value="1"/>
</dbReference>
<dbReference type="SUPFAM" id="SSF56762">
    <property type="entry name" value="HydB/Nqo4-like"/>
    <property type="match status" value="1"/>
</dbReference>
<dbReference type="PROSITE" id="PS00535">
    <property type="entry name" value="COMPLEX1_49K"/>
    <property type="match status" value="1"/>
</dbReference>
<feature type="chain" id="PRO_0000357867" description="NADH-quinone oxidoreductase subunit D">
    <location>
        <begin position="1"/>
        <end position="418"/>
    </location>
</feature>
<comment type="function">
    <text evidence="1">NDH-1 shuttles electrons from NADH, via FMN and iron-sulfur (Fe-S) centers, to quinones in the respiratory chain. The immediate electron acceptor for the enzyme in this species is believed to be ubiquinone. Couples the redox reaction to proton translocation (for every two electrons transferred, four hydrogen ions are translocated across the cytoplasmic membrane), and thus conserves the redox energy in a proton gradient.</text>
</comment>
<comment type="catalytic activity">
    <reaction evidence="1">
        <text>a quinone + NADH + 5 H(+)(in) = a quinol + NAD(+) + 4 H(+)(out)</text>
        <dbReference type="Rhea" id="RHEA:57888"/>
        <dbReference type="ChEBI" id="CHEBI:15378"/>
        <dbReference type="ChEBI" id="CHEBI:24646"/>
        <dbReference type="ChEBI" id="CHEBI:57540"/>
        <dbReference type="ChEBI" id="CHEBI:57945"/>
        <dbReference type="ChEBI" id="CHEBI:132124"/>
    </reaction>
</comment>
<comment type="subunit">
    <text evidence="1">NDH-1 is composed of 14 different subunits. Subunits NuoB, C, D, E, F, and G constitute the peripheral sector of the complex.</text>
</comment>
<comment type="subcellular location">
    <subcellularLocation>
        <location evidence="1">Cell inner membrane</location>
        <topology evidence="1">Peripheral membrane protein</topology>
        <orientation evidence="1">Cytoplasmic side</orientation>
    </subcellularLocation>
</comment>
<comment type="similarity">
    <text evidence="1">Belongs to the complex I 49 kDa subunit family.</text>
</comment>
<reference key="1">
    <citation type="journal article" date="2000" name="Nature">
        <title>Complete DNA sequence of a serogroup A strain of Neisseria meningitidis Z2491.</title>
        <authorList>
            <person name="Parkhill J."/>
            <person name="Achtman M."/>
            <person name="James K.D."/>
            <person name="Bentley S.D."/>
            <person name="Churcher C.M."/>
            <person name="Klee S.R."/>
            <person name="Morelli G."/>
            <person name="Basham D."/>
            <person name="Brown D."/>
            <person name="Chillingworth T."/>
            <person name="Davies R.M."/>
            <person name="Davis P."/>
            <person name="Devlin K."/>
            <person name="Feltwell T."/>
            <person name="Hamlin N."/>
            <person name="Holroyd S."/>
            <person name="Jagels K."/>
            <person name="Leather S."/>
            <person name="Moule S."/>
            <person name="Mungall K.L."/>
            <person name="Quail M.A."/>
            <person name="Rajandream M.A."/>
            <person name="Rutherford K.M."/>
            <person name="Simmonds M."/>
            <person name="Skelton J."/>
            <person name="Whitehead S."/>
            <person name="Spratt B.G."/>
            <person name="Barrell B.G."/>
        </authorList>
    </citation>
    <scope>NUCLEOTIDE SEQUENCE [LARGE SCALE GENOMIC DNA]</scope>
    <source>
        <strain>DSM 15465 / Z2491</strain>
    </source>
</reference>
<protein>
    <recommendedName>
        <fullName evidence="1">NADH-quinone oxidoreductase subunit D</fullName>
        <ecNumber evidence="1">7.1.1.-</ecNumber>
    </recommendedName>
    <alternativeName>
        <fullName evidence="1">NADH dehydrogenase I subunit D</fullName>
    </alternativeName>
    <alternativeName>
        <fullName evidence="1">NDH-1 subunit D</fullName>
    </alternativeName>
</protein>